<evidence type="ECO:0000255" key="1">
    <source>
        <dbReference type="HAMAP-Rule" id="MF_00262"/>
    </source>
</evidence>
<sequence length="89" mass="10220">MALLDFFLSRKKTTANIAKERLQIIVAERRRGDSEPHYLPQLKRDLLAVICKYVQIDPEMVSVQLEQKGDDISVLELNVTLPENEEAPK</sequence>
<proteinExistence type="inferred from homology"/>
<dbReference type="EMBL" id="CP001600">
    <property type="protein sequence ID" value="ACR68805.1"/>
    <property type="molecule type" value="Genomic_DNA"/>
</dbReference>
<dbReference type="RefSeq" id="WP_012848314.1">
    <property type="nucleotide sequence ID" value="NZ_CP169062.1"/>
</dbReference>
<dbReference type="SMR" id="C5B9V4"/>
<dbReference type="STRING" id="67780.B6E78_01290"/>
<dbReference type="GeneID" id="72528326"/>
<dbReference type="KEGG" id="eic:NT01EI_1621"/>
<dbReference type="HOGENOM" id="CLU_137929_2_2_6"/>
<dbReference type="OrthoDB" id="9802655at2"/>
<dbReference type="Proteomes" id="UP000001485">
    <property type="component" value="Chromosome"/>
</dbReference>
<dbReference type="GO" id="GO:0051301">
    <property type="term" value="P:cell division"/>
    <property type="evidence" value="ECO:0007669"/>
    <property type="project" value="UniProtKB-KW"/>
</dbReference>
<dbReference type="GO" id="GO:0032955">
    <property type="term" value="P:regulation of division septum assembly"/>
    <property type="evidence" value="ECO:0007669"/>
    <property type="project" value="InterPro"/>
</dbReference>
<dbReference type="FunFam" id="3.30.1070.10:FF:000001">
    <property type="entry name" value="Cell division topological specificity factor"/>
    <property type="match status" value="1"/>
</dbReference>
<dbReference type="Gene3D" id="3.30.1070.10">
    <property type="entry name" value="Cell division topological specificity factor MinE"/>
    <property type="match status" value="1"/>
</dbReference>
<dbReference type="HAMAP" id="MF_00262">
    <property type="entry name" value="MinE"/>
    <property type="match status" value="1"/>
</dbReference>
<dbReference type="InterPro" id="IPR005527">
    <property type="entry name" value="MinE"/>
</dbReference>
<dbReference type="InterPro" id="IPR036707">
    <property type="entry name" value="MinE_sf"/>
</dbReference>
<dbReference type="NCBIfam" id="TIGR01215">
    <property type="entry name" value="minE"/>
    <property type="match status" value="1"/>
</dbReference>
<dbReference type="NCBIfam" id="NF001422">
    <property type="entry name" value="PRK00296.1"/>
    <property type="match status" value="1"/>
</dbReference>
<dbReference type="Pfam" id="PF03776">
    <property type="entry name" value="MinE"/>
    <property type="match status" value="1"/>
</dbReference>
<dbReference type="SUPFAM" id="SSF55229">
    <property type="entry name" value="Cell division protein MinE topological specificity domain"/>
    <property type="match status" value="1"/>
</dbReference>
<keyword id="KW-0131">Cell cycle</keyword>
<keyword id="KW-0132">Cell division</keyword>
<comment type="function">
    <text evidence="1">Prevents the cell division inhibition by proteins MinC and MinD at internal division sites while permitting inhibition at polar sites. This ensures cell division at the proper site by restricting the formation of a division septum at the midpoint of the long axis of the cell.</text>
</comment>
<comment type="similarity">
    <text evidence="1">Belongs to the MinE family.</text>
</comment>
<accession>C5B9V4</accession>
<organism>
    <name type="scientific">Edwardsiella ictaluri (strain 93-146)</name>
    <dbReference type="NCBI Taxonomy" id="634503"/>
    <lineage>
        <taxon>Bacteria</taxon>
        <taxon>Pseudomonadati</taxon>
        <taxon>Pseudomonadota</taxon>
        <taxon>Gammaproteobacteria</taxon>
        <taxon>Enterobacterales</taxon>
        <taxon>Hafniaceae</taxon>
        <taxon>Edwardsiella</taxon>
    </lineage>
</organism>
<name>MINE_EDWI9</name>
<gene>
    <name evidence="1" type="primary">minE</name>
    <name type="ordered locus">NT01EI_1621</name>
</gene>
<reference key="1">
    <citation type="submission" date="2009-03" db="EMBL/GenBank/DDBJ databases">
        <title>Complete genome sequence of Edwardsiella ictaluri 93-146.</title>
        <authorList>
            <person name="Williams M.L."/>
            <person name="Gillaspy A.F."/>
            <person name="Dyer D.W."/>
            <person name="Thune R.L."/>
            <person name="Waldbieser G.C."/>
            <person name="Schuster S.C."/>
            <person name="Gipson J."/>
            <person name="Zaitshik J."/>
            <person name="Landry C."/>
            <person name="Lawrence M.L."/>
        </authorList>
    </citation>
    <scope>NUCLEOTIDE SEQUENCE [LARGE SCALE GENOMIC DNA]</scope>
    <source>
        <strain>93-146</strain>
    </source>
</reference>
<feature type="chain" id="PRO_1000204680" description="Cell division topological specificity factor">
    <location>
        <begin position="1"/>
        <end position="89"/>
    </location>
</feature>
<protein>
    <recommendedName>
        <fullName evidence="1">Cell division topological specificity factor</fullName>
    </recommendedName>
</protein>